<organism>
    <name type="scientific">Streptococcus pyogenes serotype M4 (strain MGAS10750)</name>
    <dbReference type="NCBI Taxonomy" id="370554"/>
    <lineage>
        <taxon>Bacteria</taxon>
        <taxon>Bacillati</taxon>
        <taxon>Bacillota</taxon>
        <taxon>Bacilli</taxon>
        <taxon>Lactobacillales</taxon>
        <taxon>Streptococcaceae</taxon>
        <taxon>Streptococcus</taxon>
    </lineage>
</organism>
<keyword id="KW-0963">Cytoplasm</keyword>
<keyword id="KW-0235">DNA replication</keyword>
<keyword id="KW-0236">DNA replication inhibitor</keyword>
<keyword id="KW-0479">Metal-binding</keyword>
<keyword id="KW-0862">Zinc</keyword>
<gene>
    <name evidence="1" type="primary">yabA</name>
    <name type="ordered locus">MGAS10750_Spy0330</name>
</gene>
<evidence type="ECO:0000255" key="1">
    <source>
        <dbReference type="HAMAP-Rule" id="MF_01159"/>
    </source>
</evidence>
<protein>
    <recommendedName>
        <fullName evidence="1">Replication initiation control protein YabA</fullName>
    </recommendedName>
</protein>
<reference key="1">
    <citation type="journal article" date="2006" name="Proc. Natl. Acad. Sci. U.S.A.">
        <title>Molecular genetic anatomy of inter- and intraserotype variation in the human bacterial pathogen group A Streptococcus.</title>
        <authorList>
            <person name="Beres S.B."/>
            <person name="Richter E.W."/>
            <person name="Nagiec M.J."/>
            <person name="Sumby P."/>
            <person name="Porcella S.F."/>
            <person name="DeLeo F.R."/>
            <person name="Musser J.M."/>
        </authorList>
    </citation>
    <scope>NUCLEOTIDE SEQUENCE [LARGE SCALE GENOMIC DNA]</scope>
    <source>
        <strain>MGAS10750</strain>
    </source>
</reference>
<accession>Q1J881</accession>
<name>YABA_STRPF</name>
<comment type="function">
    <text evidence="1">Involved in control of chromosome replication initiation. Inhibits the cooperative binding of DnaA to the oriC region, thus negatively regulating initiation of chromosome replication. Inhibits the ability of DnaA-ATP to form a helix on DNA; does not disassemble preformed DnaA-DNA helices. Decreases the residence time of DnaA on the chromosome at its binding sites (oriC, replication forks and promoter-binding sites). Tethers DnaA to the replication machinery via the DNA polymerase beta sliding clamp subunit (dnaN). Associates with oriC and other DnaA targets on the chromosome in a DnaA-dependent manner.</text>
</comment>
<comment type="cofactor">
    <cofactor evidence="1">
        <name>Zn(2+)</name>
        <dbReference type="ChEBI" id="CHEBI:29105"/>
    </cofactor>
    <text evidence="1">Binds 1 zinc ion per subunit.</text>
</comment>
<comment type="subunit">
    <text evidence="1">Homotetramer. Interacts with both DnaA and DnaN, acting as a bridge between these two proteins.</text>
</comment>
<comment type="subcellular location">
    <subcellularLocation>
        <location evidence="1">Cytoplasm</location>
        <location evidence="1">Nucleoid</location>
    </subcellularLocation>
    <text evidence="1">Localizes in tight foci, which correspond to the replisome at mid-cell throughout the cell cycle.</text>
</comment>
<comment type="similarity">
    <text evidence="1">Belongs to the YabA family.</text>
</comment>
<feature type="chain" id="PRO_1000065590" description="Replication initiation control protein YabA">
    <location>
        <begin position="1"/>
        <end position="107"/>
    </location>
</feature>
<feature type="binding site" evidence="1">
    <location>
        <position position="81"/>
    </location>
    <ligand>
        <name>Zn(2+)</name>
        <dbReference type="ChEBI" id="CHEBI:29105"/>
    </ligand>
</feature>
<feature type="binding site" evidence="1">
    <location>
        <position position="83"/>
    </location>
    <ligand>
        <name>Zn(2+)</name>
        <dbReference type="ChEBI" id="CHEBI:29105"/>
    </ligand>
</feature>
<feature type="binding site" evidence="1">
    <location>
        <position position="97"/>
    </location>
    <ligand>
        <name>Zn(2+)</name>
        <dbReference type="ChEBI" id="CHEBI:29105"/>
    </ligand>
</feature>
<feature type="binding site" evidence="1">
    <location>
        <position position="100"/>
    </location>
    <ligand>
        <name>Zn(2+)</name>
        <dbReference type="ChEBI" id="CHEBI:29105"/>
    </ligand>
</feature>
<dbReference type="EMBL" id="CP000262">
    <property type="protein sequence ID" value="ABF37280.1"/>
    <property type="molecule type" value="Genomic_DNA"/>
</dbReference>
<dbReference type="SMR" id="Q1J881"/>
<dbReference type="KEGG" id="spi:MGAS10750_Spy0330"/>
<dbReference type="HOGENOM" id="CLU_157169_0_0_9"/>
<dbReference type="Proteomes" id="UP000002434">
    <property type="component" value="Chromosome"/>
</dbReference>
<dbReference type="GO" id="GO:0009295">
    <property type="term" value="C:nucleoid"/>
    <property type="evidence" value="ECO:0007669"/>
    <property type="project" value="UniProtKB-SubCell"/>
</dbReference>
<dbReference type="GO" id="GO:0006260">
    <property type="term" value="P:DNA replication"/>
    <property type="evidence" value="ECO:0007669"/>
    <property type="project" value="UniProtKB-UniRule"/>
</dbReference>
<dbReference type="HAMAP" id="MF_01159">
    <property type="entry name" value="YabA"/>
    <property type="match status" value="1"/>
</dbReference>
<dbReference type="InterPro" id="IPR010377">
    <property type="entry name" value="YabA"/>
</dbReference>
<dbReference type="NCBIfam" id="NF009640">
    <property type="entry name" value="PRK13169.1-1"/>
    <property type="match status" value="1"/>
</dbReference>
<dbReference type="Pfam" id="PF06156">
    <property type="entry name" value="YabA"/>
    <property type="match status" value="1"/>
</dbReference>
<dbReference type="PIRSF" id="PIRSF021439">
    <property type="entry name" value="DUF972"/>
    <property type="match status" value="1"/>
</dbReference>
<proteinExistence type="inferred from homology"/>
<sequence>MNKKELFDAFDGFSQNLMVTLAEIEAMKKQVQSLVEENTILRLENTKLRERLSHLEHETVAKNPSKQRKDHLEGIYDEGFHICNFFYGQRRENDEECMFCRELLDRK</sequence>